<accession>Q6AGF6</accession>
<keyword id="KW-0342">GTP-binding</keyword>
<keyword id="KW-0547">Nucleotide-binding</keyword>
<keyword id="KW-1185">Reference proteome</keyword>
<keyword id="KW-0677">Repeat</keyword>
<keyword id="KW-0690">Ribosome biogenesis</keyword>
<name>DER_LEIXX</name>
<organism>
    <name type="scientific">Leifsonia xyli subsp. xyli (strain CTCB07)</name>
    <dbReference type="NCBI Taxonomy" id="281090"/>
    <lineage>
        <taxon>Bacteria</taxon>
        <taxon>Bacillati</taxon>
        <taxon>Actinomycetota</taxon>
        <taxon>Actinomycetes</taxon>
        <taxon>Micrococcales</taxon>
        <taxon>Microbacteriaceae</taxon>
        <taxon>Leifsonia</taxon>
    </lineage>
</organism>
<reference key="1">
    <citation type="journal article" date="2004" name="Mol. Plant Microbe Interact.">
        <title>The genome sequence of the Gram-positive sugarcane pathogen Leifsonia xyli subsp. xyli.</title>
        <authorList>
            <person name="Monteiro-Vitorello C.B."/>
            <person name="Camargo L.E.A."/>
            <person name="Van Sluys M.A."/>
            <person name="Kitajima J.P."/>
            <person name="Truffi D."/>
            <person name="do Amaral A.M."/>
            <person name="Harakava R."/>
            <person name="de Oliveira J.C.F."/>
            <person name="Wood D."/>
            <person name="de Oliveira M.C."/>
            <person name="Miyaki C.Y."/>
            <person name="Takita M.A."/>
            <person name="da Silva A.C.R."/>
            <person name="Furlan L.R."/>
            <person name="Carraro D.M."/>
            <person name="Camarotte G."/>
            <person name="Almeida N.F. Jr."/>
            <person name="Carrer H."/>
            <person name="Coutinho L.L."/>
            <person name="El-Dorry H.A."/>
            <person name="Ferro M.I.T."/>
            <person name="Gagliardi P.R."/>
            <person name="Giglioti E."/>
            <person name="Goldman M.H.S."/>
            <person name="Goldman G.H."/>
            <person name="Kimura E.T."/>
            <person name="Ferro E.S."/>
            <person name="Kuramae E.E."/>
            <person name="Lemos E.G.M."/>
            <person name="Lemos M.V.F."/>
            <person name="Mauro S.M.Z."/>
            <person name="Machado M.A."/>
            <person name="Marino C.L."/>
            <person name="Menck C.F."/>
            <person name="Nunes L.R."/>
            <person name="Oliveira R.C."/>
            <person name="Pereira G.G."/>
            <person name="Siqueira W."/>
            <person name="de Souza A.A."/>
            <person name="Tsai S.M."/>
            <person name="Zanca A.S."/>
            <person name="Simpson A.J.G."/>
            <person name="Brumbley S.M."/>
            <person name="Setubal J.C."/>
        </authorList>
    </citation>
    <scope>NUCLEOTIDE SEQUENCE [LARGE SCALE GENOMIC DNA]</scope>
    <source>
        <strain>CTCB07</strain>
    </source>
</reference>
<evidence type="ECO:0000255" key="1">
    <source>
        <dbReference type="HAMAP-Rule" id="MF_00195"/>
    </source>
</evidence>
<sequence length="481" mass="53098">MDDDLALQRAVALRSGLDDYELDDADLDLLEVDGEDADAIAFLPALPVLAIVGRPNVGKSALVNRILGRREAVVEDTPGVTRDRVSYRAEWNGRRFTVVDTGGWEPDARGIDASVAAQAEVAIDLADAVMFVVDAMVGATSTDEHVVRLLRKSDKPVFLAANKVDDARQEPSATELWSLGLGEPHPVSALHGRGVADLLDKILKALPDVSAVAKQEVGGPRRVAILGRPNVGKSSLLNKAAGEERVVVNELAGTTRDPVDEQVELGGRVWRFVDTAGIRRRVHLQQGADFYASLRTSTALEKAEVAVVVLDVSQPISEQDVRIIDLVLESGRALVLAFNKWDLLDDERRRYLEREIEQDLAHVSWAPRVNISARTGRHLEKLVPALERALESWETRIPTGKFNAFLAELTSAHPHPVRGGKQPRILFGTQSTSRPPTFVVFTTGFLDPGYRRYVIRRLREVYGFEGTPIVLNMRVREKRKH</sequence>
<proteinExistence type="inferred from homology"/>
<feature type="chain" id="PRO_0000179005" description="GTPase Der">
    <location>
        <begin position="1"/>
        <end position="481"/>
    </location>
</feature>
<feature type="domain" description="EngA-type G 1">
    <location>
        <begin position="47"/>
        <end position="210"/>
    </location>
</feature>
<feature type="domain" description="EngA-type G 2">
    <location>
        <begin position="221"/>
        <end position="394"/>
    </location>
</feature>
<feature type="domain" description="KH-like" evidence="1">
    <location>
        <begin position="395"/>
        <end position="477"/>
    </location>
</feature>
<feature type="binding site" evidence="1">
    <location>
        <begin position="53"/>
        <end position="60"/>
    </location>
    <ligand>
        <name>GTP</name>
        <dbReference type="ChEBI" id="CHEBI:37565"/>
        <label>1</label>
    </ligand>
</feature>
<feature type="binding site" evidence="1">
    <location>
        <begin position="100"/>
        <end position="104"/>
    </location>
    <ligand>
        <name>GTP</name>
        <dbReference type="ChEBI" id="CHEBI:37565"/>
        <label>1</label>
    </ligand>
</feature>
<feature type="binding site" evidence="1">
    <location>
        <begin position="162"/>
        <end position="165"/>
    </location>
    <ligand>
        <name>GTP</name>
        <dbReference type="ChEBI" id="CHEBI:37565"/>
        <label>1</label>
    </ligand>
</feature>
<feature type="binding site" evidence="1">
    <location>
        <begin position="227"/>
        <end position="234"/>
    </location>
    <ligand>
        <name>GTP</name>
        <dbReference type="ChEBI" id="CHEBI:37565"/>
        <label>2</label>
    </ligand>
</feature>
<feature type="binding site" evidence="1">
    <location>
        <begin position="274"/>
        <end position="278"/>
    </location>
    <ligand>
        <name>GTP</name>
        <dbReference type="ChEBI" id="CHEBI:37565"/>
        <label>2</label>
    </ligand>
</feature>
<feature type="binding site" evidence="1">
    <location>
        <begin position="339"/>
        <end position="342"/>
    </location>
    <ligand>
        <name>GTP</name>
        <dbReference type="ChEBI" id="CHEBI:37565"/>
        <label>2</label>
    </ligand>
</feature>
<dbReference type="EMBL" id="AE016822">
    <property type="protein sequence ID" value="AAT88539.1"/>
    <property type="molecule type" value="Genomic_DNA"/>
</dbReference>
<dbReference type="SMR" id="Q6AGF6"/>
<dbReference type="STRING" id="281090.Lxx05740"/>
<dbReference type="KEGG" id="lxx:Lxx05740"/>
<dbReference type="eggNOG" id="COG1160">
    <property type="taxonomic scope" value="Bacteria"/>
</dbReference>
<dbReference type="HOGENOM" id="CLU_016077_6_2_11"/>
<dbReference type="Proteomes" id="UP000001306">
    <property type="component" value="Chromosome"/>
</dbReference>
<dbReference type="GO" id="GO:0016887">
    <property type="term" value="F:ATP hydrolysis activity"/>
    <property type="evidence" value="ECO:0007669"/>
    <property type="project" value="InterPro"/>
</dbReference>
<dbReference type="GO" id="GO:0005525">
    <property type="term" value="F:GTP binding"/>
    <property type="evidence" value="ECO:0007669"/>
    <property type="project" value="UniProtKB-UniRule"/>
</dbReference>
<dbReference type="GO" id="GO:0043022">
    <property type="term" value="F:ribosome binding"/>
    <property type="evidence" value="ECO:0007669"/>
    <property type="project" value="TreeGrafter"/>
</dbReference>
<dbReference type="GO" id="GO:0042254">
    <property type="term" value="P:ribosome biogenesis"/>
    <property type="evidence" value="ECO:0007669"/>
    <property type="project" value="UniProtKB-KW"/>
</dbReference>
<dbReference type="CDD" id="cd01894">
    <property type="entry name" value="EngA1"/>
    <property type="match status" value="1"/>
</dbReference>
<dbReference type="CDD" id="cd01895">
    <property type="entry name" value="EngA2"/>
    <property type="match status" value="1"/>
</dbReference>
<dbReference type="FunFam" id="3.30.300.20:FF:000004">
    <property type="entry name" value="GTPase Der"/>
    <property type="match status" value="1"/>
</dbReference>
<dbReference type="FunFam" id="3.40.50.300:FF:000040">
    <property type="entry name" value="GTPase Der"/>
    <property type="match status" value="1"/>
</dbReference>
<dbReference type="FunFam" id="3.40.50.300:FF:000057">
    <property type="entry name" value="GTPase Der"/>
    <property type="match status" value="1"/>
</dbReference>
<dbReference type="Gene3D" id="3.30.300.20">
    <property type="match status" value="1"/>
</dbReference>
<dbReference type="Gene3D" id="3.40.50.300">
    <property type="entry name" value="P-loop containing nucleotide triphosphate hydrolases"/>
    <property type="match status" value="2"/>
</dbReference>
<dbReference type="HAMAP" id="MF_00195">
    <property type="entry name" value="GTPase_Der"/>
    <property type="match status" value="1"/>
</dbReference>
<dbReference type="InterPro" id="IPR003593">
    <property type="entry name" value="AAA+_ATPase"/>
</dbReference>
<dbReference type="InterPro" id="IPR031166">
    <property type="entry name" value="G_ENGA"/>
</dbReference>
<dbReference type="InterPro" id="IPR006073">
    <property type="entry name" value="GTP-bd"/>
</dbReference>
<dbReference type="InterPro" id="IPR016484">
    <property type="entry name" value="GTPase_Der"/>
</dbReference>
<dbReference type="InterPro" id="IPR032859">
    <property type="entry name" value="KH_dom-like"/>
</dbReference>
<dbReference type="InterPro" id="IPR015946">
    <property type="entry name" value="KH_dom-like_a/b"/>
</dbReference>
<dbReference type="InterPro" id="IPR027417">
    <property type="entry name" value="P-loop_NTPase"/>
</dbReference>
<dbReference type="InterPro" id="IPR005225">
    <property type="entry name" value="Small_GTP-bd"/>
</dbReference>
<dbReference type="NCBIfam" id="TIGR03594">
    <property type="entry name" value="GTPase_EngA"/>
    <property type="match status" value="1"/>
</dbReference>
<dbReference type="NCBIfam" id="NF002828">
    <property type="entry name" value="PRK03003.1"/>
    <property type="match status" value="1"/>
</dbReference>
<dbReference type="NCBIfam" id="TIGR00231">
    <property type="entry name" value="small_GTP"/>
    <property type="match status" value="2"/>
</dbReference>
<dbReference type="PANTHER" id="PTHR43834">
    <property type="entry name" value="GTPASE DER"/>
    <property type="match status" value="1"/>
</dbReference>
<dbReference type="PANTHER" id="PTHR43834:SF6">
    <property type="entry name" value="GTPASE DER"/>
    <property type="match status" value="1"/>
</dbReference>
<dbReference type="Pfam" id="PF14714">
    <property type="entry name" value="KH_dom-like"/>
    <property type="match status" value="1"/>
</dbReference>
<dbReference type="Pfam" id="PF01926">
    <property type="entry name" value="MMR_HSR1"/>
    <property type="match status" value="2"/>
</dbReference>
<dbReference type="PIRSF" id="PIRSF006485">
    <property type="entry name" value="GTP-binding_EngA"/>
    <property type="match status" value="1"/>
</dbReference>
<dbReference type="PRINTS" id="PR00326">
    <property type="entry name" value="GTP1OBG"/>
</dbReference>
<dbReference type="SMART" id="SM00382">
    <property type="entry name" value="AAA"/>
    <property type="match status" value="2"/>
</dbReference>
<dbReference type="SUPFAM" id="SSF52540">
    <property type="entry name" value="P-loop containing nucleoside triphosphate hydrolases"/>
    <property type="match status" value="2"/>
</dbReference>
<dbReference type="PROSITE" id="PS51712">
    <property type="entry name" value="G_ENGA"/>
    <property type="match status" value="2"/>
</dbReference>
<comment type="function">
    <text evidence="1">GTPase that plays an essential role in the late steps of ribosome biogenesis.</text>
</comment>
<comment type="subunit">
    <text evidence="1">Associates with the 50S ribosomal subunit.</text>
</comment>
<comment type="similarity">
    <text evidence="1">Belongs to the TRAFAC class TrmE-Era-EngA-EngB-Septin-like GTPase superfamily. EngA (Der) GTPase family.</text>
</comment>
<protein>
    <recommendedName>
        <fullName evidence="1">GTPase Der</fullName>
    </recommendedName>
    <alternativeName>
        <fullName evidence="1">GTP-binding protein EngA</fullName>
    </alternativeName>
</protein>
<gene>
    <name evidence="1" type="primary">der</name>
    <name type="synonym">engA</name>
    <name type="ordered locus">Lxx05740</name>
</gene>